<reference key="1">
    <citation type="journal article" date="2002" name="Appl. Environ. Microbiol.">
        <title>Molecular characterization of the leucine cluster in Buchnera sp. strain PSY, a primary endosymbiont of the aphid Pemphigus spyrothecae.</title>
        <authorList>
            <person name="Sabater-Munoz B."/>
            <person name="Gomez-Valero L."/>
            <person name="van Ham R.C.H.J."/>
            <person name="Silva F.J."/>
            <person name="Latorre A."/>
        </authorList>
    </citation>
    <scope>NUCLEOTIDE SEQUENCE [GENOMIC DNA]</scope>
</reference>
<sequence>MTLLNQYTGIVIPINISNIDTDVIIPKQFLKKINKKGFGKYLFYNWRFNDNEGKNINKNFILNDLRYKKSSILLTRDNFGCGSSREHAVWALMDYGFKVIIASSFGDIFYNNCLNNHLIPIILSENKINTLFDITSNYIDVSFTIDLKNNTILAKNYAYYFKIDALHKFCIMHQLDQIDLTMKNEKKITKYEKKIFDFFIKK</sequence>
<organism>
    <name type="scientific">Buchnera aphidicola subsp. Pemphigus spyrothecae</name>
    <dbReference type="NCBI Taxonomy" id="98799"/>
    <lineage>
        <taxon>Bacteria</taxon>
        <taxon>Pseudomonadati</taxon>
        <taxon>Pseudomonadota</taxon>
        <taxon>Gammaproteobacteria</taxon>
        <taxon>Enterobacterales</taxon>
        <taxon>Erwiniaceae</taxon>
        <taxon>Buchnera</taxon>
    </lineage>
</organism>
<name>LEUD_BUCPS</name>
<dbReference type="EC" id="4.2.1.33" evidence="1"/>
<dbReference type="EMBL" id="AJ426489">
    <property type="protein sequence ID" value="CAD20140.1"/>
    <property type="molecule type" value="Genomic_DNA"/>
</dbReference>
<dbReference type="SMR" id="P59019"/>
<dbReference type="UniPathway" id="UPA00048">
    <property type="reaction ID" value="UER00071"/>
</dbReference>
<dbReference type="GO" id="GO:0009316">
    <property type="term" value="C:3-isopropylmalate dehydratase complex"/>
    <property type="evidence" value="ECO:0007669"/>
    <property type="project" value="InterPro"/>
</dbReference>
<dbReference type="GO" id="GO:0003861">
    <property type="term" value="F:3-isopropylmalate dehydratase activity"/>
    <property type="evidence" value="ECO:0007669"/>
    <property type="project" value="UniProtKB-UniRule"/>
</dbReference>
<dbReference type="GO" id="GO:0009098">
    <property type="term" value="P:L-leucine biosynthetic process"/>
    <property type="evidence" value="ECO:0007669"/>
    <property type="project" value="UniProtKB-UniRule"/>
</dbReference>
<dbReference type="CDD" id="cd01577">
    <property type="entry name" value="IPMI_Swivel"/>
    <property type="match status" value="1"/>
</dbReference>
<dbReference type="FunFam" id="3.20.19.10:FF:000003">
    <property type="entry name" value="3-isopropylmalate dehydratase small subunit"/>
    <property type="match status" value="1"/>
</dbReference>
<dbReference type="Gene3D" id="3.20.19.10">
    <property type="entry name" value="Aconitase, domain 4"/>
    <property type="match status" value="1"/>
</dbReference>
<dbReference type="HAMAP" id="MF_01031">
    <property type="entry name" value="LeuD_type1"/>
    <property type="match status" value="1"/>
</dbReference>
<dbReference type="InterPro" id="IPR004431">
    <property type="entry name" value="3-IsopropMal_deHydase_ssu"/>
</dbReference>
<dbReference type="InterPro" id="IPR015928">
    <property type="entry name" value="Aconitase/3IPM_dehydase_swvl"/>
</dbReference>
<dbReference type="InterPro" id="IPR000573">
    <property type="entry name" value="AconitaseA/IPMdHydase_ssu_swvl"/>
</dbReference>
<dbReference type="InterPro" id="IPR033940">
    <property type="entry name" value="IPMI_Swivel"/>
</dbReference>
<dbReference type="InterPro" id="IPR050075">
    <property type="entry name" value="LeuD"/>
</dbReference>
<dbReference type="NCBIfam" id="TIGR00171">
    <property type="entry name" value="leuD"/>
    <property type="match status" value="1"/>
</dbReference>
<dbReference type="NCBIfam" id="NF002458">
    <property type="entry name" value="PRK01641.1"/>
    <property type="match status" value="1"/>
</dbReference>
<dbReference type="PANTHER" id="PTHR43345:SF5">
    <property type="entry name" value="3-ISOPROPYLMALATE DEHYDRATASE SMALL SUBUNIT"/>
    <property type="match status" value="1"/>
</dbReference>
<dbReference type="PANTHER" id="PTHR43345">
    <property type="entry name" value="3-ISOPROPYLMALATE DEHYDRATASE SMALL SUBUNIT 2-RELATED-RELATED"/>
    <property type="match status" value="1"/>
</dbReference>
<dbReference type="Pfam" id="PF00694">
    <property type="entry name" value="Aconitase_C"/>
    <property type="match status" value="1"/>
</dbReference>
<dbReference type="SUPFAM" id="SSF52016">
    <property type="entry name" value="LeuD/IlvD-like"/>
    <property type="match status" value="1"/>
</dbReference>
<protein>
    <recommendedName>
        <fullName evidence="1">3-isopropylmalate dehydratase small subunit</fullName>
        <ecNumber evidence="1">4.2.1.33</ecNumber>
    </recommendedName>
    <alternativeName>
        <fullName evidence="1">Alpha-IPM isomerase</fullName>
        <shortName evidence="1">IPMI</shortName>
    </alternativeName>
    <alternativeName>
        <fullName evidence="1">Isopropylmalate isomerase</fullName>
    </alternativeName>
</protein>
<proteinExistence type="inferred from homology"/>
<keyword id="KW-0028">Amino-acid biosynthesis</keyword>
<keyword id="KW-0100">Branched-chain amino acid biosynthesis</keyword>
<keyword id="KW-0432">Leucine biosynthesis</keyword>
<keyword id="KW-0456">Lyase</keyword>
<gene>
    <name evidence="1" type="primary">leuD</name>
</gene>
<comment type="function">
    <text evidence="1">Catalyzes the isomerization between 2-isopropylmalate and 3-isopropylmalate, via the formation of 2-isopropylmaleate.</text>
</comment>
<comment type="catalytic activity">
    <reaction evidence="1">
        <text>(2R,3S)-3-isopropylmalate = (2S)-2-isopropylmalate</text>
        <dbReference type="Rhea" id="RHEA:32287"/>
        <dbReference type="ChEBI" id="CHEBI:1178"/>
        <dbReference type="ChEBI" id="CHEBI:35121"/>
        <dbReference type="EC" id="4.2.1.33"/>
    </reaction>
</comment>
<comment type="pathway">
    <text evidence="1">Amino-acid biosynthesis; L-leucine biosynthesis; L-leucine from 3-methyl-2-oxobutanoate: step 2/4.</text>
</comment>
<comment type="subunit">
    <text evidence="1">Heterodimer of LeuC and LeuD.</text>
</comment>
<comment type="similarity">
    <text evidence="1">Belongs to the LeuD family. LeuD type 1 subfamily.</text>
</comment>
<accession>P59019</accession>
<evidence type="ECO:0000255" key="1">
    <source>
        <dbReference type="HAMAP-Rule" id="MF_01031"/>
    </source>
</evidence>
<feature type="chain" id="PRO_0000141800" description="3-isopropylmalate dehydratase small subunit">
    <location>
        <begin position="1"/>
        <end position="202"/>
    </location>
</feature>